<accession>Q4FSV3</accession>
<keyword id="KW-0963">Cytoplasm</keyword>
<keyword id="KW-0488">Methylation</keyword>
<keyword id="KW-0648">Protein biosynthesis</keyword>
<keyword id="KW-1185">Reference proteome</keyword>
<proteinExistence type="inferred from homology"/>
<name>RF1_PSYA2</name>
<reference key="1">
    <citation type="journal article" date="2010" name="Appl. Environ. Microbiol.">
        <title>The genome sequence of Psychrobacter arcticus 273-4, a psychroactive Siberian permafrost bacterium, reveals mechanisms for adaptation to low-temperature growth.</title>
        <authorList>
            <person name="Ayala-del-Rio H.L."/>
            <person name="Chain P.S."/>
            <person name="Grzymski J.J."/>
            <person name="Ponder M.A."/>
            <person name="Ivanova N."/>
            <person name="Bergholz P.W."/>
            <person name="Di Bartolo G."/>
            <person name="Hauser L."/>
            <person name="Land M."/>
            <person name="Bakermans C."/>
            <person name="Rodrigues D."/>
            <person name="Klappenbach J."/>
            <person name="Zarka D."/>
            <person name="Larimer F."/>
            <person name="Richardson P."/>
            <person name="Murray A."/>
            <person name="Thomashow M."/>
            <person name="Tiedje J.M."/>
        </authorList>
    </citation>
    <scope>NUCLEOTIDE SEQUENCE [LARGE SCALE GENOMIC DNA]</scope>
    <source>
        <strain>DSM 17307 / VKM B-2377 / 273-4</strain>
    </source>
</reference>
<protein>
    <recommendedName>
        <fullName evidence="1">Peptide chain release factor 1</fullName>
        <shortName evidence="1">RF-1</shortName>
    </recommendedName>
</protein>
<evidence type="ECO:0000255" key="1">
    <source>
        <dbReference type="HAMAP-Rule" id="MF_00093"/>
    </source>
</evidence>
<sequence>MKESLRLRLDQMVDRYEEVTALLSDPSVINDNNKFRELSVEHSDLMDITTLWQNYVGAETDQADAEAMLKEASDPDMKEMMQEEIDSARDTIVEMEEALNVMMLPKDPNDKVPAFLEIRAGTGGDEAAIFSGDLFRMYQKYAQAQGWTLEVLSANEGEHGGYKEIITRVSGNSVYGRLKFESGVHRVQRVPDTESQGRVHTSACTVAVMPEVEIDDTVNLNPADIRFDTFRSSGAGGQHVNTTDSAVRLTHIPTGTVVECQQERSQHKNRAQAMKMLISKIQQVKVQAQVDAADTIRRDLVGSGDRSERIRTYNFPQGRMTDHRINLTLYKLDSIMEGDLDEILDALLREHQADLMASVGGA</sequence>
<comment type="function">
    <text evidence="1">Peptide chain release factor 1 directs the termination of translation in response to the peptide chain termination codons UAG and UAA.</text>
</comment>
<comment type="subcellular location">
    <subcellularLocation>
        <location evidence="1">Cytoplasm</location>
    </subcellularLocation>
</comment>
<comment type="PTM">
    <text evidence="1">Methylated by PrmC. Methylation increases the termination efficiency of RF1.</text>
</comment>
<comment type="similarity">
    <text evidence="1">Belongs to the prokaryotic/mitochondrial release factor family.</text>
</comment>
<organism>
    <name type="scientific">Psychrobacter arcticus (strain DSM 17307 / VKM B-2377 / 273-4)</name>
    <dbReference type="NCBI Taxonomy" id="259536"/>
    <lineage>
        <taxon>Bacteria</taxon>
        <taxon>Pseudomonadati</taxon>
        <taxon>Pseudomonadota</taxon>
        <taxon>Gammaproteobacteria</taxon>
        <taxon>Moraxellales</taxon>
        <taxon>Moraxellaceae</taxon>
        <taxon>Psychrobacter</taxon>
    </lineage>
</organism>
<gene>
    <name evidence="1" type="primary">prfA</name>
    <name type="ordered locus">Psyc_1053</name>
</gene>
<feature type="chain" id="PRO_0000263325" description="Peptide chain release factor 1">
    <location>
        <begin position="1"/>
        <end position="362"/>
    </location>
</feature>
<feature type="modified residue" description="N5-methylglutamine" evidence="1">
    <location>
        <position position="238"/>
    </location>
</feature>
<dbReference type="EMBL" id="CP000082">
    <property type="protein sequence ID" value="AAZ18905.1"/>
    <property type="molecule type" value="Genomic_DNA"/>
</dbReference>
<dbReference type="RefSeq" id="WP_011280327.1">
    <property type="nucleotide sequence ID" value="NC_007204.1"/>
</dbReference>
<dbReference type="SMR" id="Q4FSV3"/>
<dbReference type="STRING" id="259536.Psyc_1053"/>
<dbReference type="KEGG" id="par:Psyc_1053"/>
<dbReference type="eggNOG" id="COG0216">
    <property type="taxonomic scope" value="Bacteria"/>
</dbReference>
<dbReference type="HOGENOM" id="CLU_036856_0_1_6"/>
<dbReference type="OrthoDB" id="9806673at2"/>
<dbReference type="Proteomes" id="UP000000546">
    <property type="component" value="Chromosome"/>
</dbReference>
<dbReference type="GO" id="GO:0005737">
    <property type="term" value="C:cytoplasm"/>
    <property type="evidence" value="ECO:0007669"/>
    <property type="project" value="UniProtKB-SubCell"/>
</dbReference>
<dbReference type="GO" id="GO:0016149">
    <property type="term" value="F:translation release factor activity, codon specific"/>
    <property type="evidence" value="ECO:0007669"/>
    <property type="project" value="UniProtKB-UniRule"/>
</dbReference>
<dbReference type="FunFam" id="3.30.160.20:FF:000004">
    <property type="entry name" value="Peptide chain release factor 1"/>
    <property type="match status" value="1"/>
</dbReference>
<dbReference type="FunFam" id="3.30.70.1660:FF:000002">
    <property type="entry name" value="Peptide chain release factor 1"/>
    <property type="match status" value="1"/>
</dbReference>
<dbReference type="FunFam" id="3.30.70.1660:FF:000004">
    <property type="entry name" value="Peptide chain release factor 1"/>
    <property type="match status" value="1"/>
</dbReference>
<dbReference type="Gene3D" id="3.30.160.20">
    <property type="match status" value="1"/>
</dbReference>
<dbReference type="Gene3D" id="3.30.70.1660">
    <property type="match status" value="2"/>
</dbReference>
<dbReference type="Gene3D" id="6.10.140.1950">
    <property type="match status" value="1"/>
</dbReference>
<dbReference type="HAMAP" id="MF_00093">
    <property type="entry name" value="Rel_fac_1"/>
    <property type="match status" value="1"/>
</dbReference>
<dbReference type="InterPro" id="IPR005139">
    <property type="entry name" value="PCRF"/>
</dbReference>
<dbReference type="InterPro" id="IPR000352">
    <property type="entry name" value="Pep_chain_release_fac_I"/>
</dbReference>
<dbReference type="InterPro" id="IPR045853">
    <property type="entry name" value="Pep_chain_release_fac_I_sf"/>
</dbReference>
<dbReference type="InterPro" id="IPR050057">
    <property type="entry name" value="Prokaryotic/Mito_RF"/>
</dbReference>
<dbReference type="InterPro" id="IPR004373">
    <property type="entry name" value="RF-1"/>
</dbReference>
<dbReference type="NCBIfam" id="TIGR00019">
    <property type="entry name" value="prfA"/>
    <property type="match status" value="1"/>
</dbReference>
<dbReference type="NCBIfam" id="NF001859">
    <property type="entry name" value="PRK00591.1"/>
    <property type="match status" value="1"/>
</dbReference>
<dbReference type="PANTHER" id="PTHR43804">
    <property type="entry name" value="LD18447P"/>
    <property type="match status" value="1"/>
</dbReference>
<dbReference type="PANTHER" id="PTHR43804:SF7">
    <property type="entry name" value="LD18447P"/>
    <property type="match status" value="1"/>
</dbReference>
<dbReference type="Pfam" id="PF03462">
    <property type="entry name" value="PCRF"/>
    <property type="match status" value="1"/>
</dbReference>
<dbReference type="Pfam" id="PF00472">
    <property type="entry name" value="RF-1"/>
    <property type="match status" value="1"/>
</dbReference>
<dbReference type="SMART" id="SM00937">
    <property type="entry name" value="PCRF"/>
    <property type="match status" value="1"/>
</dbReference>
<dbReference type="SUPFAM" id="SSF75620">
    <property type="entry name" value="Release factor"/>
    <property type="match status" value="1"/>
</dbReference>
<dbReference type="PROSITE" id="PS00745">
    <property type="entry name" value="RF_PROK_I"/>
    <property type="match status" value="1"/>
</dbReference>